<protein>
    <recommendedName>
        <fullName>Gastrula zinc finger protein XlCGF9.1</fullName>
    </recommendedName>
</protein>
<keyword id="KW-0238">DNA-binding</keyword>
<keyword id="KW-0479">Metal-binding</keyword>
<keyword id="KW-0539">Nucleus</keyword>
<keyword id="KW-1185">Reference proteome</keyword>
<keyword id="KW-0677">Repeat</keyword>
<keyword id="KW-0804">Transcription</keyword>
<keyword id="KW-0805">Transcription regulation</keyword>
<keyword id="KW-0862">Zinc</keyword>
<keyword id="KW-0863">Zinc-finger</keyword>
<comment type="function">
    <text>May be involved in transcriptional regulation.</text>
</comment>
<comment type="subcellular location">
    <subcellularLocation>
        <location evidence="2">Nucleus</location>
    </subcellularLocation>
</comment>
<comment type="similarity">
    <text evidence="2">Belongs to the krueppel C2H2-type zinc-finger protein family.</text>
</comment>
<sequence>TGEKPFICSDCGKCFNDSSILIRHMKIHTGEKPFCCPQCGRKFRRRAHLIVHERTHTGEKPFTCPECGKSFARRSHLMDHRIIHNGEKKYSCPECGKCFGLQGYLNKHFKIH</sequence>
<organism>
    <name type="scientific">Xenopus laevis</name>
    <name type="common">African clawed frog</name>
    <dbReference type="NCBI Taxonomy" id="8355"/>
    <lineage>
        <taxon>Eukaryota</taxon>
        <taxon>Metazoa</taxon>
        <taxon>Chordata</taxon>
        <taxon>Craniata</taxon>
        <taxon>Vertebrata</taxon>
        <taxon>Euteleostomi</taxon>
        <taxon>Amphibia</taxon>
        <taxon>Batrachia</taxon>
        <taxon>Anura</taxon>
        <taxon>Pipoidea</taxon>
        <taxon>Pipidae</taxon>
        <taxon>Xenopodinae</taxon>
        <taxon>Xenopus</taxon>
        <taxon>Xenopus</taxon>
    </lineage>
</organism>
<proteinExistence type="inferred from homology"/>
<accession>P18738</accession>
<feature type="chain" id="PRO_0000047785" description="Gastrula zinc finger protein XlCGF9.1">
    <location>
        <begin position="1" status="less than"/>
        <end position="112" status="greater than"/>
    </location>
</feature>
<feature type="zinc finger region" description="C2H2-type 1" evidence="1">
    <location>
        <begin position="6"/>
        <end position="28"/>
    </location>
</feature>
<feature type="zinc finger region" description="C2H2-type 2" evidence="1">
    <location>
        <begin position="34"/>
        <end position="56"/>
    </location>
</feature>
<feature type="zinc finger region" description="C2H2-type 3" evidence="1">
    <location>
        <begin position="62"/>
        <end position="84"/>
    </location>
</feature>
<feature type="zinc finger region" description="C2H2-type 4" evidence="1">
    <location>
        <begin position="90"/>
        <end position="112"/>
    </location>
</feature>
<feature type="non-terminal residue">
    <location>
        <position position="1"/>
    </location>
</feature>
<feature type="non-terminal residue">
    <location>
        <position position="112"/>
    </location>
</feature>
<evidence type="ECO:0000255" key="1">
    <source>
        <dbReference type="PROSITE-ProRule" id="PRU00042"/>
    </source>
</evidence>
<evidence type="ECO:0000305" key="2"/>
<reference key="1">
    <citation type="journal article" date="1989" name="J. Mol. Biol.">
        <title>Second-order repeats in Xenopus laevis finger proteins.</title>
        <authorList>
            <person name="Nietfeld W."/>
            <person name="El-Baradi T."/>
            <person name="Mentzel H."/>
            <person name="Pieler T."/>
            <person name="Koester M."/>
            <person name="Poeting A."/>
            <person name="Knoechel W."/>
        </authorList>
    </citation>
    <scope>NUCLEOTIDE SEQUENCE</scope>
</reference>
<dbReference type="PIR" id="S06562">
    <property type="entry name" value="S06562"/>
</dbReference>
<dbReference type="SMR" id="P18738"/>
<dbReference type="Proteomes" id="UP000186698">
    <property type="component" value="Unplaced"/>
</dbReference>
<dbReference type="GO" id="GO:0005634">
    <property type="term" value="C:nucleus"/>
    <property type="evidence" value="ECO:0007669"/>
    <property type="project" value="UniProtKB-SubCell"/>
</dbReference>
<dbReference type="GO" id="GO:0000981">
    <property type="term" value="F:DNA-binding transcription factor activity, RNA polymerase II-specific"/>
    <property type="evidence" value="ECO:0007669"/>
    <property type="project" value="TreeGrafter"/>
</dbReference>
<dbReference type="GO" id="GO:0000978">
    <property type="term" value="F:RNA polymerase II cis-regulatory region sequence-specific DNA binding"/>
    <property type="evidence" value="ECO:0007669"/>
    <property type="project" value="TreeGrafter"/>
</dbReference>
<dbReference type="GO" id="GO:0008270">
    <property type="term" value="F:zinc ion binding"/>
    <property type="evidence" value="ECO:0007669"/>
    <property type="project" value="UniProtKB-KW"/>
</dbReference>
<dbReference type="FunFam" id="3.30.160.60:FF:000759">
    <property type="entry name" value="zinc finger protein 16"/>
    <property type="match status" value="1"/>
</dbReference>
<dbReference type="FunFam" id="3.30.160.60:FF:001158">
    <property type="entry name" value="zinc finger protein 22"/>
    <property type="match status" value="1"/>
</dbReference>
<dbReference type="FunFam" id="3.30.160.60:FF:001385">
    <property type="entry name" value="zinc finger protein 774"/>
    <property type="match status" value="1"/>
</dbReference>
<dbReference type="FunFam" id="3.30.160.60:FF:000110">
    <property type="entry name" value="Zinc finger protein-like"/>
    <property type="match status" value="1"/>
</dbReference>
<dbReference type="Gene3D" id="3.30.160.60">
    <property type="entry name" value="Classic Zinc Finger"/>
    <property type="match status" value="4"/>
</dbReference>
<dbReference type="InterPro" id="IPR036236">
    <property type="entry name" value="Znf_C2H2_sf"/>
</dbReference>
<dbReference type="InterPro" id="IPR013087">
    <property type="entry name" value="Znf_C2H2_type"/>
</dbReference>
<dbReference type="PANTHER" id="PTHR23235:SF178">
    <property type="entry name" value="C2H2-TYPE DOMAIN-CONTAINING PROTEIN-RELATED"/>
    <property type="match status" value="1"/>
</dbReference>
<dbReference type="PANTHER" id="PTHR23235">
    <property type="entry name" value="KRUEPPEL-LIKE TRANSCRIPTION FACTOR"/>
    <property type="match status" value="1"/>
</dbReference>
<dbReference type="Pfam" id="PF00096">
    <property type="entry name" value="zf-C2H2"/>
    <property type="match status" value="4"/>
</dbReference>
<dbReference type="SMART" id="SM00355">
    <property type="entry name" value="ZnF_C2H2"/>
    <property type="match status" value="4"/>
</dbReference>
<dbReference type="SUPFAM" id="SSF57667">
    <property type="entry name" value="beta-beta-alpha zinc fingers"/>
    <property type="match status" value="2"/>
</dbReference>
<dbReference type="PROSITE" id="PS00028">
    <property type="entry name" value="ZINC_FINGER_C2H2_1"/>
    <property type="match status" value="4"/>
</dbReference>
<dbReference type="PROSITE" id="PS50157">
    <property type="entry name" value="ZINC_FINGER_C2H2_2"/>
    <property type="match status" value="4"/>
</dbReference>
<name>ZG9_XENLA</name>